<organism>
    <name type="scientific">Methanococcoides burtonii (strain DSM 6242 / NBRC 107633 / OCM 468 / ACE-M)</name>
    <dbReference type="NCBI Taxonomy" id="259564"/>
    <lineage>
        <taxon>Archaea</taxon>
        <taxon>Methanobacteriati</taxon>
        <taxon>Methanobacteriota</taxon>
        <taxon>Stenosarchaea group</taxon>
        <taxon>Methanomicrobia</taxon>
        <taxon>Methanosarcinales</taxon>
        <taxon>Methanosarcinaceae</taxon>
        <taxon>Methanococcoides</taxon>
    </lineage>
</organism>
<keyword id="KW-1003">Cell membrane</keyword>
<keyword id="KW-0444">Lipid biosynthesis</keyword>
<keyword id="KW-0443">Lipid metabolism</keyword>
<keyword id="KW-0460">Magnesium</keyword>
<keyword id="KW-0472">Membrane</keyword>
<keyword id="KW-0594">Phospholipid biosynthesis</keyword>
<keyword id="KW-1208">Phospholipid metabolism</keyword>
<keyword id="KW-0808">Transferase</keyword>
<keyword id="KW-0812">Transmembrane</keyword>
<keyword id="KW-1133">Transmembrane helix</keyword>
<accession>Q12X42</accession>
<comment type="function">
    <text evidence="1">Catalyzes the formation of CDP-2,3-bis-(O-geranylgeranyl)-sn-glycerol (CDP-archaeol) from 2,3-bis-(O-geranylgeranyl)-sn-glycerol 1-phosphate (DGGGP) and CTP. This reaction is the third ether-bond-formation step in the biosynthesis of archaeal membrane lipids.</text>
</comment>
<comment type="catalytic activity">
    <reaction evidence="1">
        <text>2,3-bis-O-(geranylgeranyl)-sn-glycerol 1-phosphate + CTP + H(+) = CDP-2,3-bis-O-(geranylgeranyl)-sn-glycerol + diphosphate</text>
        <dbReference type="Rhea" id="RHEA:25690"/>
        <dbReference type="ChEBI" id="CHEBI:15378"/>
        <dbReference type="ChEBI" id="CHEBI:33019"/>
        <dbReference type="ChEBI" id="CHEBI:37563"/>
        <dbReference type="ChEBI" id="CHEBI:58837"/>
        <dbReference type="ChEBI" id="CHEBI:58838"/>
        <dbReference type="EC" id="2.7.7.67"/>
    </reaction>
</comment>
<comment type="cofactor">
    <cofactor evidence="1">
        <name>Mg(2+)</name>
        <dbReference type="ChEBI" id="CHEBI:18420"/>
    </cofactor>
</comment>
<comment type="pathway">
    <text evidence="1">Membrane lipid metabolism; glycerophospholipid metabolism.</text>
</comment>
<comment type="subcellular location">
    <subcellularLocation>
        <location evidence="1">Cell membrane</location>
        <topology evidence="1">Multi-pass membrane protein</topology>
    </subcellularLocation>
</comment>
<comment type="similarity">
    <text evidence="1">Belongs to the CDP-archaeol synthase family.</text>
</comment>
<sequence length="175" mass="19133">MLPAYLPNPFAALFGGGRPIDNGKTMSDGRRILGDGKTYRGFFVGLIFGALAGLMQMQLLEKYPVLFGVELPTFGTGGSNTTILIFALAVGSLFGDMFMSFFKRRMGLKRGAPLPVIDQLDFVLGALIFAYLASPVWFAEQFTFKVIAVILIITPLLHLATNVVGYFIGVKKEPW</sequence>
<evidence type="ECO:0000255" key="1">
    <source>
        <dbReference type="HAMAP-Rule" id="MF_01117"/>
    </source>
</evidence>
<dbReference type="EC" id="2.7.7.67" evidence="1"/>
<dbReference type="EMBL" id="CP000300">
    <property type="protein sequence ID" value="ABE51984.1"/>
    <property type="molecule type" value="Genomic_DNA"/>
</dbReference>
<dbReference type="SMR" id="Q12X42"/>
<dbReference type="STRING" id="259564.Mbur_1051"/>
<dbReference type="KEGG" id="mbu:Mbur_1051"/>
<dbReference type="HOGENOM" id="CLU_105710_0_0_2"/>
<dbReference type="UniPathway" id="UPA00940"/>
<dbReference type="Proteomes" id="UP000001979">
    <property type="component" value="Chromosome"/>
</dbReference>
<dbReference type="GO" id="GO:0005886">
    <property type="term" value="C:plasma membrane"/>
    <property type="evidence" value="ECO:0007669"/>
    <property type="project" value="UniProtKB-SubCell"/>
</dbReference>
<dbReference type="GO" id="GO:0043338">
    <property type="term" value="F:CDP-2,3-bis-(O-geranylgeranyl)-sn-glycerol synthase activity"/>
    <property type="evidence" value="ECO:0007669"/>
    <property type="project" value="UniProtKB-EC"/>
</dbReference>
<dbReference type="GO" id="GO:0046474">
    <property type="term" value="P:glycerophospholipid biosynthetic process"/>
    <property type="evidence" value="ECO:0007669"/>
    <property type="project" value="UniProtKB-UniRule"/>
</dbReference>
<dbReference type="HAMAP" id="MF_01117">
    <property type="entry name" value="CDP_archaeol_synth"/>
    <property type="match status" value="1"/>
</dbReference>
<dbReference type="InterPro" id="IPR032690">
    <property type="entry name" value="CarS"/>
</dbReference>
<dbReference type="InterPro" id="IPR002726">
    <property type="entry name" value="CarS_archaea"/>
</dbReference>
<dbReference type="NCBIfam" id="NF003114">
    <property type="entry name" value="PRK04032.1"/>
    <property type="match status" value="1"/>
</dbReference>
<dbReference type="PANTHER" id="PTHR39650">
    <property type="entry name" value="CDP-ARCHAEOL SYNTHASE"/>
    <property type="match status" value="1"/>
</dbReference>
<dbReference type="PANTHER" id="PTHR39650:SF1">
    <property type="entry name" value="CDP-ARCHAEOL SYNTHASE"/>
    <property type="match status" value="1"/>
</dbReference>
<dbReference type="Pfam" id="PF01864">
    <property type="entry name" value="CarS-like"/>
    <property type="match status" value="1"/>
</dbReference>
<feature type="chain" id="PRO_0000298276" description="CDP-archaeol synthase">
    <location>
        <begin position="1"/>
        <end position="175"/>
    </location>
</feature>
<feature type="transmembrane region" description="Helical" evidence="1">
    <location>
        <begin position="41"/>
        <end position="61"/>
    </location>
</feature>
<feature type="transmembrane region" description="Helical" evidence="1">
    <location>
        <begin position="82"/>
        <end position="102"/>
    </location>
</feature>
<feature type="transmembrane region" description="Helical" evidence="1">
    <location>
        <begin position="122"/>
        <end position="142"/>
    </location>
</feature>
<feature type="transmembrane region" description="Helical" evidence="1">
    <location>
        <begin position="147"/>
        <end position="167"/>
    </location>
</feature>
<reference key="1">
    <citation type="journal article" date="2009" name="ISME J.">
        <title>The genome sequence of the psychrophilic archaeon, Methanococcoides burtonii: the role of genome evolution in cold adaptation.</title>
        <authorList>
            <person name="Allen M.A."/>
            <person name="Lauro F.M."/>
            <person name="Williams T.J."/>
            <person name="Burg D."/>
            <person name="Siddiqui K.S."/>
            <person name="De Francisci D."/>
            <person name="Chong K.W."/>
            <person name="Pilak O."/>
            <person name="Chew H.H."/>
            <person name="De Maere M.Z."/>
            <person name="Ting L."/>
            <person name="Katrib M."/>
            <person name="Ng C."/>
            <person name="Sowers K.R."/>
            <person name="Galperin M.Y."/>
            <person name="Anderson I.J."/>
            <person name="Ivanova N."/>
            <person name="Dalin E."/>
            <person name="Martinez M."/>
            <person name="Lapidus A."/>
            <person name="Hauser L."/>
            <person name="Land M."/>
            <person name="Thomas T."/>
            <person name="Cavicchioli R."/>
        </authorList>
    </citation>
    <scope>NUCLEOTIDE SEQUENCE [LARGE SCALE GENOMIC DNA]</scope>
    <source>
        <strain>DSM 6242 / NBRC 107633 / OCM 468 / ACE-M</strain>
    </source>
</reference>
<name>CDPAS_METBU</name>
<gene>
    <name evidence="1" type="primary">carS</name>
    <name type="ordered locus">Mbur_1051</name>
</gene>
<protein>
    <recommendedName>
        <fullName evidence="1">CDP-archaeol synthase</fullName>
        <ecNumber evidence="1">2.7.7.67</ecNumber>
    </recommendedName>
    <alternativeName>
        <fullName evidence="1">CDP-2,3-bis-(O-geranylgeranyl)-sn-glycerol synthase</fullName>
    </alternativeName>
</protein>
<proteinExistence type="inferred from homology"/>